<proteinExistence type="inferred from homology"/>
<accession>B5RGH8</accession>
<organism>
    <name type="scientific">Salmonella gallinarum (strain 287/91 / NCTC 13346)</name>
    <dbReference type="NCBI Taxonomy" id="550538"/>
    <lineage>
        <taxon>Bacteria</taxon>
        <taxon>Pseudomonadati</taxon>
        <taxon>Pseudomonadota</taxon>
        <taxon>Gammaproteobacteria</taxon>
        <taxon>Enterobacterales</taxon>
        <taxon>Enterobacteriaceae</taxon>
        <taxon>Salmonella</taxon>
    </lineage>
</organism>
<dbReference type="EC" id="1.1.1.94" evidence="1"/>
<dbReference type="EMBL" id="AM933173">
    <property type="protein sequence ID" value="CAR39511.1"/>
    <property type="molecule type" value="Genomic_DNA"/>
</dbReference>
<dbReference type="RefSeq" id="WP_001076596.1">
    <property type="nucleotide sequence ID" value="NC_011274.1"/>
</dbReference>
<dbReference type="SMR" id="B5RGH8"/>
<dbReference type="KEGG" id="seg:SG3731"/>
<dbReference type="HOGENOM" id="CLU_033449_0_2_6"/>
<dbReference type="UniPathway" id="UPA00940"/>
<dbReference type="Proteomes" id="UP000008321">
    <property type="component" value="Chromosome"/>
</dbReference>
<dbReference type="GO" id="GO:0005829">
    <property type="term" value="C:cytosol"/>
    <property type="evidence" value="ECO:0007669"/>
    <property type="project" value="TreeGrafter"/>
</dbReference>
<dbReference type="GO" id="GO:0047952">
    <property type="term" value="F:glycerol-3-phosphate dehydrogenase [NAD(P)+] activity"/>
    <property type="evidence" value="ECO:0007669"/>
    <property type="project" value="UniProtKB-UniRule"/>
</dbReference>
<dbReference type="GO" id="GO:0051287">
    <property type="term" value="F:NAD binding"/>
    <property type="evidence" value="ECO:0007669"/>
    <property type="project" value="InterPro"/>
</dbReference>
<dbReference type="GO" id="GO:0005975">
    <property type="term" value="P:carbohydrate metabolic process"/>
    <property type="evidence" value="ECO:0007669"/>
    <property type="project" value="InterPro"/>
</dbReference>
<dbReference type="GO" id="GO:0046167">
    <property type="term" value="P:glycerol-3-phosphate biosynthetic process"/>
    <property type="evidence" value="ECO:0007669"/>
    <property type="project" value="UniProtKB-UniRule"/>
</dbReference>
<dbReference type="GO" id="GO:0046168">
    <property type="term" value="P:glycerol-3-phosphate catabolic process"/>
    <property type="evidence" value="ECO:0007669"/>
    <property type="project" value="InterPro"/>
</dbReference>
<dbReference type="GO" id="GO:0046474">
    <property type="term" value="P:glycerophospholipid biosynthetic process"/>
    <property type="evidence" value="ECO:0007669"/>
    <property type="project" value="TreeGrafter"/>
</dbReference>
<dbReference type="FunFam" id="1.10.1040.10:FF:000001">
    <property type="entry name" value="Glycerol-3-phosphate dehydrogenase [NAD(P)+]"/>
    <property type="match status" value="1"/>
</dbReference>
<dbReference type="FunFam" id="3.40.50.720:FF:000019">
    <property type="entry name" value="Glycerol-3-phosphate dehydrogenase [NAD(P)+]"/>
    <property type="match status" value="1"/>
</dbReference>
<dbReference type="Gene3D" id="1.10.1040.10">
    <property type="entry name" value="N-(1-d-carboxylethyl)-l-norvaline Dehydrogenase, domain 2"/>
    <property type="match status" value="1"/>
</dbReference>
<dbReference type="Gene3D" id="3.40.50.720">
    <property type="entry name" value="NAD(P)-binding Rossmann-like Domain"/>
    <property type="match status" value="1"/>
</dbReference>
<dbReference type="HAMAP" id="MF_00394">
    <property type="entry name" value="NAD_Glyc3P_dehydrog"/>
    <property type="match status" value="1"/>
</dbReference>
<dbReference type="InterPro" id="IPR008927">
    <property type="entry name" value="6-PGluconate_DH-like_C_sf"/>
</dbReference>
<dbReference type="InterPro" id="IPR013328">
    <property type="entry name" value="6PGD_dom2"/>
</dbReference>
<dbReference type="InterPro" id="IPR006168">
    <property type="entry name" value="G3P_DH_NAD-dep"/>
</dbReference>
<dbReference type="InterPro" id="IPR006109">
    <property type="entry name" value="G3P_DH_NAD-dep_C"/>
</dbReference>
<dbReference type="InterPro" id="IPR011128">
    <property type="entry name" value="G3P_DH_NAD-dep_N"/>
</dbReference>
<dbReference type="InterPro" id="IPR036291">
    <property type="entry name" value="NAD(P)-bd_dom_sf"/>
</dbReference>
<dbReference type="NCBIfam" id="NF000939">
    <property type="entry name" value="PRK00094.1-1"/>
    <property type="match status" value="1"/>
</dbReference>
<dbReference type="NCBIfam" id="NF000940">
    <property type="entry name" value="PRK00094.1-2"/>
    <property type="match status" value="1"/>
</dbReference>
<dbReference type="NCBIfam" id="NF000942">
    <property type="entry name" value="PRK00094.1-4"/>
    <property type="match status" value="1"/>
</dbReference>
<dbReference type="PANTHER" id="PTHR11728">
    <property type="entry name" value="GLYCEROL-3-PHOSPHATE DEHYDROGENASE"/>
    <property type="match status" value="1"/>
</dbReference>
<dbReference type="PANTHER" id="PTHR11728:SF1">
    <property type="entry name" value="GLYCEROL-3-PHOSPHATE DEHYDROGENASE [NAD(+)] 2, CHLOROPLASTIC"/>
    <property type="match status" value="1"/>
</dbReference>
<dbReference type="Pfam" id="PF07479">
    <property type="entry name" value="NAD_Gly3P_dh_C"/>
    <property type="match status" value="1"/>
</dbReference>
<dbReference type="Pfam" id="PF01210">
    <property type="entry name" value="NAD_Gly3P_dh_N"/>
    <property type="match status" value="1"/>
</dbReference>
<dbReference type="PIRSF" id="PIRSF000114">
    <property type="entry name" value="Glycerol-3-P_dh"/>
    <property type="match status" value="1"/>
</dbReference>
<dbReference type="PRINTS" id="PR00077">
    <property type="entry name" value="GPDHDRGNASE"/>
</dbReference>
<dbReference type="SUPFAM" id="SSF48179">
    <property type="entry name" value="6-phosphogluconate dehydrogenase C-terminal domain-like"/>
    <property type="match status" value="1"/>
</dbReference>
<dbReference type="SUPFAM" id="SSF51735">
    <property type="entry name" value="NAD(P)-binding Rossmann-fold domains"/>
    <property type="match status" value="1"/>
</dbReference>
<dbReference type="PROSITE" id="PS00957">
    <property type="entry name" value="NAD_G3PDH"/>
    <property type="match status" value="1"/>
</dbReference>
<gene>
    <name evidence="1" type="primary">gpsA</name>
    <name type="ordered locus">SG3731</name>
</gene>
<protein>
    <recommendedName>
        <fullName evidence="1">Glycerol-3-phosphate dehydrogenase [NAD(P)+]</fullName>
        <ecNumber evidence="1">1.1.1.94</ecNumber>
    </recommendedName>
    <alternativeName>
        <fullName evidence="1">NAD(P)(+)-dependent glycerol-3-phosphate dehydrogenase</fullName>
    </alternativeName>
    <alternativeName>
        <fullName evidence="1">NAD(P)H-dependent dihydroxyacetone-phosphate reductase</fullName>
    </alternativeName>
</protein>
<name>GPDA_SALG2</name>
<keyword id="KW-0963">Cytoplasm</keyword>
<keyword id="KW-0444">Lipid biosynthesis</keyword>
<keyword id="KW-0443">Lipid metabolism</keyword>
<keyword id="KW-0520">NAD</keyword>
<keyword id="KW-0521">NADP</keyword>
<keyword id="KW-0547">Nucleotide-binding</keyword>
<keyword id="KW-0560">Oxidoreductase</keyword>
<keyword id="KW-0594">Phospholipid biosynthesis</keyword>
<keyword id="KW-1208">Phospholipid metabolism</keyword>
<reference key="1">
    <citation type="journal article" date="2008" name="Genome Res.">
        <title>Comparative genome analysis of Salmonella enteritidis PT4 and Salmonella gallinarum 287/91 provides insights into evolutionary and host adaptation pathways.</title>
        <authorList>
            <person name="Thomson N.R."/>
            <person name="Clayton D.J."/>
            <person name="Windhorst D."/>
            <person name="Vernikos G."/>
            <person name="Davidson S."/>
            <person name="Churcher C."/>
            <person name="Quail M.A."/>
            <person name="Stevens M."/>
            <person name="Jones M.A."/>
            <person name="Watson M."/>
            <person name="Barron A."/>
            <person name="Layton A."/>
            <person name="Pickard D."/>
            <person name="Kingsley R.A."/>
            <person name="Bignell A."/>
            <person name="Clark L."/>
            <person name="Harris B."/>
            <person name="Ormond D."/>
            <person name="Abdellah Z."/>
            <person name="Brooks K."/>
            <person name="Cherevach I."/>
            <person name="Chillingworth T."/>
            <person name="Woodward J."/>
            <person name="Norberczak H."/>
            <person name="Lord A."/>
            <person name="Arrowsmith C."/>
            <person name="Jagels K."/>
            <person name="Moule S."/>
            <person name="Mungall K."/>
            <person name="Saunders M."/>
            <person name="Whitehead S."/>
            <person name="Chabalgoity J.A."/>
            <person name="Maskell D."/>
            <person name="Humphreys T."/>
            <person name="Roberts M."/>
            <person name="Barrow P.A."/>
            <person name="Dougan G."/>
            <person name="Parkhill J."/>
        </authorList>
    </citation>
    <scope>NUCLEOTIDE SEQUENCE [LARGE SCALE GENOMIC DNA]</scope>
    <source>
        <strain>287/91 / NCTC 13346</strain>
    </source>
</reference>
<comment type="function">
    <text evidence="1">Catalyzes the reduction of the glycolytic intermediate dihydroxyacetone phosphate (DHAP) to sn-glycerol 3-phosphate (G3P), the key precursor for phospholipid synthesis.</text>
</comment>
<comment type="catalytic activity">
    <reaction evidence="1">
        <text>sn-glycerol 3-phosphate + NAD(+) = dihydroxyacetone phosphate + NADH + H(+)</text>
        <dbReference type="Rhea" id="RHEA:11092"/>
        <dbReference type="ChEBI" id="CHEBI:15378"/>
        <dbReference type="ChEBI" id="CHEBI:57540"/>
        <dbReference type="ChEBI" id="CHEBI:57597"/>
        <dbReference type="ChEBI" id="CHEBI:57642"/>
        <dbReference type="ChEBI" id="CHEBI:57945"/>
        <dbReference type="EC" id="1.1.1.94"/>
    </reaction>
    <physiologicalReaction direction="right-to-left" evidence="1">
        <dbReference type="Rhea" id="RHEA:11094"/>
    </physiologicalReaction>
</comment>
<comment type="catalytic activity">
    <reaction evidence="1">
        <text>sn-glycerol 3-phosphate + NADP(+) = dihydroxyacetone phosphate + NADPH + H(+)</text>
        <dbReference type="Rhea" id="RHEA:11096"/>
        <dbReference type="ChEBI" id="CHEBI:15378"/>
        <dbReference type="ChEBI" id="CHEBI:57597"/>
        <dbReference type="ChEBI" id="CHEBI:57642"/>
        <dbReference type="ChEBI" id="CHEBI:57783"/>
        <dbReference type="ChEBI" id="CHEBI:58349"/>
        <dbReference type="EC" id="1.1.1.94"/>
    </reaction>
    <physiologicalReaction direction="right-to-left" evidence="1">
        <dbReference type="Rhea" id="RHEA:11098"/>
    </physiologicalReaction>
</comment>
<comment type="pathway">
    <text evidence="1">Membrane lipid metabolism; glycerophospholipid metabolism.</text>
</comment>
<comment type="subcellular location">
    <subcellularLocation>
        <location evidence="1">Cytoplasm</location>
    </subcellularLocation>
</comment>
<comment type="similarity">
    <text evidence="1">Belongs to the NAD-dependent glycerol-3-phosphate dehydrogenase family.</text>
</comment>
<sequence>MNQSNASMTVIGAGSYGTALAITLARNGHQVVLWGHDPKHIATLEHDRCNVAFLPDVPFPDTLHLESDLATALAASRNILVVVPSHVFSDVLRQIKPLMRPDARLVWATKGLEAETGRLLQDVAREALGDQIPLAVISGPTFAKELAAGLPTAISLASTDETFADDLQQLLHCGKSFRVYINADFIGVQLGGAVKNVIAIGAGMSDGIGFGANARTALITRGLTEMSRLGAALGADPATFMGMAGLGDLVLTCTDNQSRNRRFGMMLGQGMDVKGAQDKIGQVVEGYRNTKEVRELAHRFGVEMPITEEIYQVLYCGKNAREAALTLLGRARKEELSRH</sequence>
<feature type="chain" id="PRO_1000123183" description="Glycerol-3-phosphate dehydrogenase [NAD(P)+]">
    <location>
        <begin position="1"/>
        <end position="339"/>
    </location>
</feature>
<feature type="active site" description="Proton acceptor" evidence="1">
    <location>
        <position position="195"/>
    </location>
</feature>
<feature type="binding site" evidence="1">
    <location>
        <position position="15"/>
    </location>
    <ligand>
        <name>NADPH</name>
        <dbReference type="ChEBI" id="CHEBI:57783"/>
    </ligand>
</feature>
<feature type="binding site" evidence="1">
    <location>
        <position position="16"/>
    </location>
    <ligand>
        <name>NADPH</name>
        <dbReference type="ChEBI" id="CHEBI:57783"/>
    </ligand>
</feature>
<feature type="binding site" evidence="1">
    <location>
        <position position="36"/>
    </location>
    <ligand>
        <name>NADPH</name>
        <dbReference type="ChEBI" id="CHEBI:57783"/>
    </ligand>
</feature>
<feature type="binding site" evidence="1">
    <location>
        <position position="110"/>
    </location>
    <ligand>
        <name>NADPH</name>
        <dbReference type="ChEBI" id="CHEBI:57783"/>
    </ligand>
</feature>
<feature type="binding site" evidence="1">
    <location>
        <position position="110"/>
    </location>
    <ligand>
        <name>sn-glycerol 3-phosphate</name>
        <dbReference type="ChEBI" id="CHEBI:57597"/>
    </ligand>
</feature>
<feature type="binding site" evidence="1">
    <location>
        <position position="139"/>
    </location>
    <ligand>
        <name>sn-glycerol 3-phosphate</name>
        <dbReference type="ChEBI" id="CHEBI:57597"/>
    </ligand>
</feature>
<feature type="binding site" evidence="1">
    <location>
        <position position="141"/>
    </location>
    <ligand>
        <name>sn-glycerol 3-phosphate</name>
        <dbReference type="ChEBI" id="CHEBI:57597"/>
    </ligand>
</feature>
<feature type="binding site" evidence="1">
    <location>
        <position position="143"/>
    </location>
    <ligand>
        <name>NADPH</name>
        <dbReference type="ChEBI" id="CHEBI:57783"/>
    </ligand>
</feature>
<feature type="binding site" evidence="1">
    <location>
        <position position="195"/>
    </location>
    <ligand>
        <name>sn-glycerol 3-phosphate</name>
        <dbReference type="ChEBI" id="CHEBI:57597"/>
    </ligand>
</feature>
<feature type="binding site" evidence="1">
    <location>
        <position position="248"/>
    </location>
    <ligand>
        <name>sn-glycerol 3-phosphate</name>
        <dbReference type="ChEBI" id="CHEBI:57597"/>
    </ligand>
</feature>
<feature type="binding site" evidence="1">
    <location>
        <position position="258"/>
    </location>
    <ligand>
        <name>sn-glycerol 3-phosphate</name>
        <dbReference type="ChEBI" id="CHEBI:57597"/>
    </ligand>
</feature>
<feature type="binding site" evidence="1">
    <location>
        <position position="259"/>
    </location>
    <ligand>
        <name>NADPH</name>
        <dbReference type="ChEBI" id="CHEBI:57783"/>
    </ligand>
</feature>
<feature type="binding site" evidence="1">
    <location>
        <position position="259"/>
    </location>
    <ligand>
        <name>sn-glycerol 3-phosphate</name>
        <dbReference type="ChEBI" id="CHEBI:57597"/>
    </ligand>
</feature>
<feature type="binding site" evidence="1">
    <location>
        <position position="260"/>
    </location>
    <ligand>
        <name>sn-glycerol 3-phosphate</name>
        <dbReference type="ChEBI" id="CHEBI:57597"/>
    </ligand>
</feature>
<feature type="binding site" evidence="1">
    <location>
        <position position="283"/>
    </location>
    <ligand>
        <name>NADPH</name>
        <dbReference type="ChEBI" id="CHEBI:57783"/>
    </ligand>
</feature>
<feature type="binding site" evidence="1">
    <location>
        <position position="285"/>
    </location>
    <ligand>
        <name>NADPH</name>
        <dbReference type="ChEBI" id="CHEBI:57783"/>
    </ligand>
</feature>
<evidence type="ECO:0000255" key="1">
    <source>
        <dbReference type="HAMAP-Rule" id="MF_00394"/>
    </source>
</evidence>